<organism>
    <name type="scientific">Mycobacterium bovis (strain ATCC BAA-935 / AF2122/97)</name>
    <dbReference type="NCBI Taxonomy" id="233413"/>
    <lineage>
        <taxon>Bacteria</taxon>
        <taxon>Bacillati</taxon>
        <taxon>Actinomycetota</taxon>
        <taxon>Actinomycetes</taxon>
        <taxon>Mycobacteriales</taxon>
        <taxon>Mycobacteriaceae</taxon>
        <taxon>Mycobacterium</taxon>
        <taxon>Mycobacterium tuberculosis complex</taxon>
    </lineage>
</organism>
<feature type="chain" id="PRO_0000077117" description="Large ribosomal subunit protein uL3">
    <location>
        <begin position="1"/>
        <end position="217"/>
    </location>
</feature>
<feature type="sequence conflict" description="In Ref. 1; CAA73672." evidence="2" ref="1">
    <original>V</original>
    <variation>A</variation>
    <location>
        <position position="24"/>
    </location>
</feature>
<accession>P60441</accession>
<accession>A0A1R3XW45</accession>
<accession>O06044</accession>
<accession>P95049</accession>
<accession>X2BFW2</accession>
<evidence type="ECO:0000255" key="1">
    <source>
        <dbReference type="HAMAP-Rule" id="MF_01325"/>
    </source>
</evidence>
<evidence type="ECO:0000305" key="2"/>
<sequence length="217" mass="23090">MARKGILGTKLGMTQVFDESNRVVPVTVVKAGPNVVTRIRTPERDGYSAVQLAYGEISPRKVNKPLTGQYTAAGVNPRRYLAELRLDDSDAATEYQVGQELTAEIFADGSYVDVTGTSKGKGFAGTMKRHGFRGQGASHGAQAVHRRPGSIGGCATPARVFKGTRMAGRMGNDRVTVLNLLVHKVDAENGVLLIKGAVPGRTGGLVMVRSAIKRGEK</sequence>
<comment type="function">
    <text evidence="1">One of the primary rRNA binding proteins, it binds directly near the 3'-end of the 23S rRNA, where it nucleates assembly of the 50S subunit.</text>
</comment>
<comment type="subunit">
    <text evidence="1">Part of the 50S ribosomal subunit. Forms a cluster with proteins L14 and L19.</text>
</comment>
<comment type="similarity">
    <text evidence="1">Belongs to the universal ribosomal protein uL3 family.</text>
</comment>
<dbReference type="EMBL" id="Y13228">
    <property type="protein sequence ID" value="CAA73672.1"/>
    <property type="molecule type" value="Genomic_DNA"/>
</dbReference>
<dbReference type="EMBL" id="LT708304">
    <property type="protein sequence ID" value="SIT99320.1"/>
    <property type="molecule type" value="Genomic_DNA"/>
</dbReference>
<dbReference type="RefSeq" id="NP_854379.1">
    <property type="nucleotide sequence ID" value="NC_002945.3"/>
</dbReference>
<dbReference type="RefSeq" id="WP_003403579.1">
    <property type="nucleotide sequence ID" value="NC_002945.4"/>
</dbReference>
<dbReference type="SMR" id="P60441"/>
<dbReference type="GeneID" id="45424666"/>
<dbReference type="KEGG" id="mbo:BQ2027_MB0721"/>
<dbReference type="PATRIC" id="fig|233413.5.peg.787"/>
<dbReference type="Proteomes" id="UP000001419">
    <property type="component" value="Chromosome"/>
</dbReference>
<dbReference type="GO" id="GO:0022625">
    <property type="term" value="C:cytosolic large ribosomal subunit"/>
    <property type="evidence" value="ECO:0007669"/>
    <property type="project" value="TreeGrafter"/>
</dbReference>
<dbReference type="GO" id="GO:0019843">
    <property type="term" value="F:rRNA binding"/>
    <property type="evidence" value="ECO:0007669"/>
    <property type="project" value="UniProtKB-UniRule"/>
</dbReference>
<dbReference type="GO" id="GO:0003735">
    <property type="term" value="F:structural constituent of ribosome"/>
    <property type="evidence" value="ECO:0007669"/>
    <property type="project" value="InterPro"/>
</dbReference>
<dbReference type="GO" id="GO:0006412">
    <property type="term" value="P:translation"/>
    <property type="evidence" value="ECO:0007669"/>
    <property type="project" value="UniProtKB-UniRule"/>
</dbReference>
<dbReference type="FunFam" id="2.40.30.10:FF:000004">
    <property type="entry name" value="50S ribosomal protein L3"/>
    <property type="match status" value="1"/>
</dbReference>
<dbReference type="FunFam" id="3.30.160.810:FF:000001">
    <property type="entry name" value="50S ribosomal protein L3"/>
    <property type="match status" value="1"/>
</dbReference>
<dbReference type="Gene3D" id="3.30.160.810">
    <property type="match status" value="1"/>
</dbReference>
<dbReference type="Gene3D" id="2.40.30.10">
    <property type="entry name" value="Translation factors"/>
    <property type="match status" value="1"/>
</dbReference>
<dbReference type="HAMAP" id="MF_01325_B">
    <property type="entry name" value="Ribosomal_uL3_B"/>
    <property type="match status" value="1"/>
</dbReference>
<dbReference type="InterPro" id="IPR000597">
    <property type="entry name" value="Ribosomal_uL3"/>
</dbReference>
<dbReference type="InterPro" id="IPR019927">
    <property type="entry name" value="Ribosomal_uL3_bac/org-type"/>
</dbReference>
<dbReference type="InterPro" id="IPR019926">
    <property type="entry name" value="Ribosomal_uL3_CS"/>
</dbReference>
<dbReference type="InterPro" id="IPR009000">
    <property type="entry name" value="Transl_B-barrel_sf"/>
</dbReference>
<dbReference type="NCBIfam" id="TIGR03625">
    <property type="entry name" value="L3_bact"/>
    <property type="match status" value="1"/>
</dbReference>
<dbReference type="PANTHER" id="PTHR11229">
    <property type="entry name" value="50S RIBOSOMAL PROTEIN L3"/>
    <property type="match status" value="1"/>
</dbReference>
<dbReference type="PANTHER" id="PTHR11229:SF16">
    <property type="entry name" value="LARGE RIBOSOMAL SUBUNIT PROTEIN UL3C"/>
    <property type="match status" value="1"/>
</dbReference>
<dbReference type="Pfam" id="PF00297">
    <property type="entry name" value="Ribosomal_L3"/>
    <property type="match status" value="1"/>
</dbReference>
<dbReference type="SUPFAM" id="SSF50447">
    <property type="entry name" value="Translation proteins"/>
    <property type="match status" value="1"/>
</dbReference>
<dbReference type="PROSITE" id="PS00474">
    <property type="entry name" value="RIBOSOMAL_L3"/>
    <property type="match status" value="1"/>
</dbReference>
<protein>
    <recommendedName>
        <fullName evidence="1">Large ribosomal subunit protein uL3</fullName>
    </recommendedName>
    <alternativeName>
        <fullName evidence="2">50S ribosomal protein L3</fullName>
    </alternativeName>
</protein>
<gene>
    <name evidence="1" type="primary">rplC</name>
    <name type="ordered locus">BQ2027_MB0721</name>
</gene>
<name>RL3_MYCBO</name>
<proteinExistence type="inferred from homology"/>
<keyword id="KW-1185">Reference proteome</keyword>
<keyword id="KW-0687">Ribonucleoprotein</keyword>
<keyword id="KW-0689">Ribosomal protein</keyword>
<keyword id="KW-0694">RNA-binding</keyword>
<keyword id="KW-0699">rRNA-binding</keyword>
<reference key="1">
    <citation type="journal article" date="1997" name="Mol. Microbiol.">
        <title>The role of ribosomal RNAs in macrolide resistance.</title>
        <authorList>
            <person name="Sander P."/>
            <person name="Prammananan T."/>
            <person name="Meier A."/>
            <person name="Frischkorn K."/>
            <person name="Boettger E.C."/>
        </authorList>
    </citation>
    <scope>NUCLEOTIDE SEQUENCE [GENOMIC DNA]</scope>
    <source>
        <strain>BCG</strain>
    </source>
</reference>
<reference key="2">
    <citation type="journal article" date="2003" name="Proc. Natl. Acad. Sci. U.S.A.">
        <title>The complete genome sequence of Mycobacterium bovis.</title>
        <authorList>
            <person name="Garnier T."/>
            <person name="Eiglmeier K."/>
            <person name="Camus J.-C."/>
            <person name="Medina N."/>
            <person name="Mansoor H."/>
            <person name="Pryor M."/>
            <person name="Duthoy S."/>
            <person name="Grondin S."/>
            <person name="Lacroix C."/>
            <person name="Monsempe C."/>
            <person name="Simon S."/>
            <person name="Harris B."/>
            <person name="Atkin R."/>
            <person name="Doggett J."/>
            <person name="Mayes R."/>
            <person name="Keating L."/>
            <person name="Wheeler P.R."/>
            <person name="Parkhill J."/>
            <person name="Barrell B.G."/>
            <person name="Cole S.T."/>
            <person name="Gordon S.V."/>
            <person name="Hewinson R.G."/>
        </authorList>
    </citation>
    <scope>NUCLEOTIDE SEQUENCE [LARGE SCALE GENOMIC DNA]</scope>
    <source>
        <strain>ATCC BAA-935 / AF2122/97</strain>
    </source>
</reference>
<reference key="3">
    <citation type="journal article" date="2017" name="Genome Announc.">
        <title>Updated reference genome sequence and annotation of Mycobacterium bovis AF2122/97.</title>
        <authorList>
            <person name="Malone K.M."/>
            <person name="Farrell D."/>
            <person name="Stuber T.P."/>
            <person name="Schubert O.T."/>
            <person name="Aebersold R."/>
            <person name="Robbe-Austerman S."/>
            <person name="Gordon S.V."/>
        </authorList>
    </citation>
    <scope>NUCLEOTIDE SEQUENCE [LARGE SCALE GENOMIC DNA]</scope>
    <scope>GENOME REANNOTATION</scope>
    <source>
        <strain>ATCC BAA-935 / AF2122/97</strain>
    </source>
</reference>